<proteinExistence type="inferred from homology"/>
<evidence type="ECO:0000255" key="1"/>
<evidence type="ECO:0000256" key="2">
    <source>
        <dbReference type="SAM" id="MobiDB-lite"/>
    </source>
</evidence>
<evidence type="ECO:0000312" key="3">
    <source>
        <dbReference type="EMBL" id="EDV47527.1"/>
    </source>
</evidence>
<feature type="chain" id="PRO_0000378602" description="DM7 family protein GG19680">
    <location>
        <begin position="1"/>
        <end position="543"/>
    </location>
</feature>
<feature type="region of interest" description="Disordered" evidence="2">
    <location>
        <begin position="415"/>
        <end position="443"/>
    </location>
</feature>
<feature type="compositionally biased region" description="Basic and acidic residues" evidence="2">
    <location>
        <begin position="415"/>
        <end position="430"/>
    </location>
</feature>
<accession>B3NY06</accession>
<organism>
    <name type="scientific">Drosophila erecta</name>
    <name type="common">Fruit fly</name>
    <dbReference type="NCBI Taxonomy" id="7220"/>
    <lineage>
        <taxon>Eukaryota</taxon>
        <taxon>Metazoa</taxon>
        <taxon>Ecdysozoa</taxon>
        <taxon>Arthropoda</taxon>
        <taxon>Hexapoda</taxon>
        <taxon>Insecta</taxon>
        <taxon>Pterygota</taxon>
        <taxon>Neoptera</taxon>
        <taxon>Endopterygota</taxon>
        <taxon>Diptera</taxon>
        <taxon>Brachycera</taxon>
        <taxon>Muscomorpha</taxon>
        <taxon>Ephydroidea</taxon>
        <taxon>Drosophilidae</taxon>
        <taxon>Drosophila</taxon>
        <taxon>Sophophora</taxon>
    </lineage>
</organism>
<protein>
    <recommendedName>
        <fullName>DM7 family protein GG19680</fullName>
    </recommendedName>
</protein>
<gene>
    <name type="ORF">GG19680</name>
</gene>
<comment type="similarity">
    <text evidence="1">Belongs to the DM7 family.</text>
</comment>
<keyword id="KW-0677">Repeat</keyword>
<name>DM7A_DROER</name>
<dbReference type="EMBL" id="CH954180">
    <property type="protein sequence ID" value="EDV47527.1"/>
    <property type="molecule type" value="Genomic_DNA"/>
</dbReference>
<dbReference type="RefSeq" id="XP_001978600.2">
    <property type="nucleotide sequence ID" value="XM_001978564.2"/>
</dbReference>
<dbReference type="eggNOG" id="ENOG502QRB1">
    <property type="taxonomic scope" value="Eukaryota"/>
</dbReference>
<dbReference type="HOGENOM" id="CLU_477581_0_0_1"/>
<dbReference type="OMA" id="NTADYQS"/>
<dbReference type="OrthoDB" id="7867651at2759"/>
<dbReference type="PhylomeDB" id="B3NY06"/>
<dbReference type="Proteomes" id="UP000008711">
    <property type="component" value="Unassembled WGS sequence"/>
</dbReference>
<dbReference type="InterPro" id="IPR006610">
    <property type="entry name" value="DM7"/>
</dbReference>
<dbReference type="SMART" id="SM00688">
    <property type="entry name" value="DM7"/>
    <property type="match status" value="2"/>
</dbReference>
<sequence>MLQIASGNREEGQVVELKKTKYLPYLFNLVMPKSFYHSHNRIVVARLYSNVHKHDKQAAEFFEGFQTPCFEVPASMFPGEAPLNKIVFMPPVMLPMGFEAGGVFGPGVLPRRSYPIDLTASGHKGQSPPLFVGLRRLYVQLPSEIESFLDKMGEFPATQDTLVYGMRRSNQLLKEEQAQELMLRNDLSLSMAYNLPAPPTPPSPYPYRHVPVQYNIYTPDLSNVLMMMPHQRKLTVAILSTVNNPHVPSVALATMGDEECPKFELPSDVFPICEGVNRPIFLPRRFLPKGFESGCVFKPGSLSELWFMGYMGRFSPPQPQHNCAITPPLFVGKISRVVLAFDLMKNIQMEYGAAQSSAQSEGSLNAVEPKKPNVPITKGFLVMETEHPTPPSGGYSLQSYQEGSAKGCVVKVEKGETQEMDEAHPTKEESKSEEEGEVQSGSQEEKYLSWFKVDSDIDLIAETMVDMGTAQMSLIDEEALPGVDGACVLNQLREVFEDRNEIRQNIDQLIHDHIYRMNRDRMLALRLPIRTCFRCGLLPCRHF</sequence>
<reference evidence="3" key="1">
    <citation type="journal article" date="2007" name="Nature">
        <title>Evolution of genes and genomes on the Drosophila phylogeny.</title>
        <authorList>
            <consortium name="Drosophila 12 genomes consortium"/>
        </authorList>
    </citation>
    <scope>NUCLEOTIDE SEQUENCE [LARGE SCALE GENOMIC DNA]</scope>
    <source>
        <strain evidence="3">Tucson 14021-0224.01</strain>
    </source>
</reference>